<gene>
    <name type="primary">ntcA</name>
    <name type="ordered locus">Synpcc7942_0127</name>
</gene>
<name>NTCA_SYNE7</name>
<organism>
    <name type="scientific">Synechococcus elongatus (strain ATCC 33912 / PCC 7942 / FACHB-805)</name>
    <name type="common">Anacystis nidulans R2</name>
    <dbReference type="NCBI Taxonomy" id="1140"/>
    <lineage>
        <taxon>Bacteria</taxon>
        <taxon>Bacillati</taxon>
        <taxon>Cyanobacteriota</taxon>
        <taxon>Cyanophyceae</taxon>
        <taxon>Synechococcales</taxon>
        <taxon>Synechococcaceae</taxon>
        <taxon>Synechococcus</taxon>
    </lineage>
</organism>
<comment type="function">
    <text>Required for full expression of proteins subject to ammonium repression. Transcriptional activator of genes subject to nitrogen control.</text>
</comment>
<comment type="interaction">
    <interactant intactId="EBI-15870797">
        <id>P29283</id>
    </interactant>
    <interactant intactId="EBI-700982">
        <id>Q7X386</id>
        <label>Synpcc7942_2061</label>
    </interactant>
    <organismsDiffer>false</organismsDiffer>
    <experiments>3</experiments>
</comment>
<feature type="chain" id="PRO_0000100186" description="Global nitrogen regulator">
    <location>
        <begin position="1"/>
        <end position="222"/>
    </location>
</feature>
<feature type="domain" description="HTH crp-type" evidence="1">
    <location>
        <begin position="142"/>
        <end position="215"/>
    </location>
</feature>
<feature type="DNA-binding region" description="H-T-H motif" evidence="1">
    <location>
        <begin position="175"/>
        <end position="194"/>
    </location>
</feature>
<feature type="binding site">
    <location>
        <begin position="6"/>
        <end position="128"/>
    </location>
    <ligand>
        <name>a nucleoside 3',5'-cyclic phosphate</name>
        <dbReference type="ChEBI" id="CHEBI:58464"/>
    </ligand>
</feature>
<feature type="helix" evidence="2">
    <location>
        <begin position="12"/>
        <end position="15"/>
    </location>
</feature>
<feature type="strand" evidence="2">
    <location>
        <begin position="18"/>
        <end position="20"/>
    </location>
</feature>
<feature type="strand" evidence="2">
    <location>
        <begin position="23"/>
        <end position="27"/>
    </location>
</feature>
<feature type="strand" evidence="2">
    <location>
        <begin position="32"/>
        <end position="34"/>
    </location>
</feature>
<feature type="strand" evidence="2">
    <location>
        <begin position="42"/>
        <end position="49"/>
    </location>
</feature>
<feature type="strand" evidence="2">
    <location>
        <begin position="51"/>
        <end position="56"/>
    </location>
</feature>
<feature type="strand" evidence="3">
    <location>
        <begin position="58"/>
        <end position="60"/>
    </location>
</feature>
<feature type="strand" evidence="2">
    <location>
        <begin position="62"/>
        <end position="68"/>
    </location>
</feature>
<feature type="strand" evidence="3">
    <location>
        <begin position="72"/>
        <end position="74"/>
    </location>
</feature>
<feature type="helix" evidence="2">
    <location>
        <begin position="78"/>
        <end position="81"/>
    </location>
</feature>
<feature type="helix" evidence="2">
    <location>
        <begin position="82"/>
        <end position="84"/>
    </location>
</feature>
<feature type="strand" evidence="2">
    <location>
        <begin position="89"/>
        <end position="95"/>
    </location>
</feature>
<feature type="strand" evidence="2">
    <location>
        <begin position="97"/>
        <end position="103"/>
    </location>
</feature>
<feature type="helix" evidence="2">
    <location>
        <begin position="104"/>
        <end position="106"/>
    </location>
</feature>
<feature type="helix" evidence="2">
    <location>
        <begin position="107"/>
        <end position="113"/>
    </location>
</feature>
<feature type="helix" evidence="2">
    <location>
        <begin position="116"/>
        <end position="140"/>
    </location>
</feature>
<feature type="helix" evidence="2">
    <location>
        <begin position="144"/>
        <end position="159"/>
    </location>
</feature>
<feature type="strand" evidence="2">
    <location>
        <begin position="160"/>
        <end position="163"/>
    </location>
</feature>
<feature type="strand" evidence="2">
    <location>
        <begin position="166"/>
        <end position="171"/>
    </location>
</feature>
<feature type="helix" evidence="2">
    <location>
        <begin position="175"/>
        <end position="182"/>
    </location>
</feature>
<feature type="helix" evidence="2">
    <location>
        <begin position="186"/>
        <end position="198"/>
    </location>
</feature>
<feature type="strand" evidence="2">
    <location>
        <begin position="201"/>
        <end position="205"/>
    </location>
</feature>
<feature type="strand" evidence="2">
    <location>
        <begin position="208"/>
        <end position="212"/>
    </location>
</feature>
<feature type="helix" evidence="2">
    <location>
        <begin position="214"/>
        <end position="219"/>
    </location>
</feature>
<accession>P29283</accession>
<accession>Q31S10</accession>
<reference key="1">
    <citation type="journal article" date="1992" name="Mol. Microbiol.">
        <title>NtcA, a global nitrogen regulator from the cyanobacterium Synechococcus that belongs to the Crp family of bacterial regulators.</title>
        <authorList>
            <person name="Vega-Palas M.A."/>
            <person name="Flores E."/>
            <person name="Herrero A."/>
        </authorList>
    </citation>
    <scope>NUCLEOTIDE SEQUENCE [GENOMIC DNA]</scope>
</reference>
<reference key="2">
    <citation type="submission" date="2005-08" db="EMBL/GenBank/DDBJ databases">
        <title>Complete sequence of chromosome 1 of Synechococcus elongatus PCC 7942.</title>
        <authorList>
            <consortium name="US DOE Joint Genome Institute"/>
            <person name="Copeland A."/>
            <person name="Lucas S."/>
            <person name="Lapidus A."/>
            <person name="Barry K."/>
            <person name="Detter J.C."/>
            <person name="Glavina T."/>
            <person name="Hammon N."/>
            <person name="Israni S."/>
            <person name="Pitluck S."/>
            <person name="Schmutz J."/>
            <person name="Larimer F."/>
            <person name="Land M."/>
            <person name="Kyrpides N."/>
            <person name="Lykidis A."/>
            <person name="Golden S."/>
            <person name="Richardson P."/>
        </authorList>
    </citation>
    <scope>NUCLEOTIDE SEQUENCE [LARGE SCALE GENOMIC DNA]</scope>
    <source>
        <strain>ATCC 33912 / PCC 7942 / FACHB-805</strain>
    </source>
</reference>
<evidence type="ECO:0000255" key="1">
    <source>
        <dbReference type="PROSITE-ProRule" id="PRU00387"/>
    </source>
</evidence>
<evidence type="ECO:0007829" key="2">
    <source>
        <dbReference type="PDB" id="2XKO"/>
    </source>
</evidence>
<evidence type="ECO:0007829" key="3">
    <source>
        <dbReference type="PDB" id="2XKP"/>
    </source>
</evidence>
<protein>
    <recommendedName>
        <fullName>Global nitrogen regulator</fullName>
    </recommendedName>
</protein>
<keyword id="KW-0002">3D-structure</keyword>
<keyword id="KW-0010">Activator</keyword>
<keyword id="KW-0238">DNA-binding</keyword>
<keyword id="KW-1185">Reference proteome</keyword>
<keyword id="KW-0804">Transcription</keyword>
<keyword id="KW-0805">Transcription regulation</keyword>
<dbReference type="EMBL" id="X60197">
    <property type="protein sequence ID" value="CAA42755.1"/>
    <property type="molecule type" value="Genomic_DNA"/>
</dbReference>
<dbReference type="EMBL" id="CP000100">
    <property type="protein sequence ID" value="ABB56159.1"/>
    <property type="molecule type" value="Genomic_DNA"/>
</dbReference>
<dbReference type="PIR" id="S25244">
    <property type="entry name" value="S25244"/>
</dbReference>
<dbReference type="PDB" id="2XGX">
    <property type="method" value="X-ray"/>
    <property type="resolution" value="2.85 A"/>
    <property type="chains" value="A/B=1-222"/>
</dbReference>
<dbReference type="PDB" id="2XHK">
    <property type="method" value="X-ray"/>
    <property type="resolution" value="2.30 A"/>
    <property type="chains" value="A/B=1-222"/>
</dbReference>
<dbReference type="PDB" id="2XKO">
    <property type="method" value="X-ray"/>
    <property type="resolution" value="2.25 A"/>
    <property type="chains" value="A/B=1-222"/>
</dbReference>
<dbReference type="PDB" id="2XKP">
    <property type="method" value="X-ray"/>
    <property type="resolution" value="3.05 A"/>
    <property type="chains" value="A/B/C/D/E/F=1-222"/>
</dbReference>
<dbReference type="PDB" id="9GQU">
    <property type="method" value="X-ray"/>
    <property type="resolution" value="2.85 A"/>
    <property type="chains" value="A/B=1-222"/>
</dbReference>
<dbReference type="PDB" id="9GUG">
    <property type="method" value="X-ray"/>
    <property type="resolution" value="2.70 A"/>
    <property type="chains" value="A/B=1-222"/>
</dbReference>
<dbReference type="PDB" id="9GUH">
    <property type="method" value="X-ray"/>
    <property type="resolution" value="3.33 A"/>
    <property type="chains" value="A=1-222"/>
</dbReference>
<dbReference type="PDB" id="9GUI">
    <property type="method" value="X-ray"/>
    <property type="resolution" value="3.00 A"/>
    <property type="chains" value="A/B=1-222"/>
</dbReference>
<dbReference type="PDB" id="9GUJ">
    <property type="method" value="X-ray"/>
    <property type="resolution" value="4.30 A"/>
    <property type="chains" value="A/B/D/F=1-222"/>
</dbReference>
<dbReference type="PDB" id="9GUK">
    <property type="method" value="X-ray"/>
    <property type="resolution" value="3.80 A"/>
    <property type="chains" value="A/B/D/F=1-222"/>
</dbReference>
<dbReference type="PDBsum" id="2XGX"/>
<dbReference type="PDBsum" id="2XHK"/>
<dbReference type="PDBsum" id="2XKO"/>
<dbReference type="PDBsum" id="2XKP"/>
<dbReference type="PDBsum" id="9GQU"/>
<dbReference type="PDBsum" id="9GUG"/>
<dbReference type="PDBsum" id="9GUH"/>
<dbReference type="PDBsum" id="9GUI"/>
<dbReference type="PDBsum" id="9GUJ"/>
<dbReference type="PDBsum" id="9GUK"/>
<dbReference type="SMR" id="P29283"/>
<dbReference type="DIP" id="DIP-59550N"/>
<dbReference type="IntAct" id="P29283">
    <property type="interactions" value="1"/>
</dbReference>
<dbReference type="STRING" id="1140.Synpcc7942_0127"/>
<dbReference type="PaxDb" id="1140-Synpcc7942_0127"/>
<dbReference type="KEGG" id="syf:Synpcc7942_0127"/>
<dbReference type="eggNOG" id="COG0664">
    <property type="taxonomic scope" value="Bacteria"/>
</dbReference>
<dbReference type="HOGENOM" id="CLU_075053_3_2_3"/>
<dbReference type="OrthoDB" id="9810708at2"/>
<dbReference type="BioCyc" id="SYNEL:NTCA"/>
<dbReference type="EvolutionaryTrace" id="P29283"/>
<dbReference type="Proteomes" id="UP000889800">
    <property type="component" value="Chromosome"/>
</dbReference>
<dbReference type="GO" id="GO:0005829">
    <property type="term" value="C:cytosol"/>
    <property type="evidence" value="ECO:0007669"/>
    <property type="project" value="TreeGrafter"/>
</dbReference>
<dbReference type="GO" id="GO:0003677">
    <property type="term" value="F:DNA binding"/>
    <property type="evidence" value="ECO:0007669"/>
    <property type="project" value="UniProtKB-KW"/>
</dbReference>
<dbReference type="GO" id="GO:0003700">
    <property type="term" value="F:DNA-binding transcription factor activity"/>
    <property type="evidence" value="ECO:0007669"/>
    <property type="project" value="InterPro"/>
</dbReference>
<dbReference type="CDD" id="cd00038">
    <property type="entry name" value="CAP_ED"/>
    <property type="match status" value="1"/>
</dbReference>
<dbReference type="CDD" id="cd00092">
    <property type="entry name" value="HTH_CRP"/>
    <property type="match status" value="1"/>
</dbReference>
<dbReference type="FunFam" id="1.10.10.10:FF:000240">
    <property type="entry name" value="Global nitrogen regulator NtcA"/>
    <property type="match status" value="1"/>
</dbReference>
<dbReference type="Gene3D" id="2.60.120.10">
    <property type="entry name" value="Jelly Rolls"/>
    <property type="match status" value="1"/>
</dbReference>
<dbReference type="Gene3D" id="1.10.10.10">
    <property type="entry name" value="Winged helix-like DNA-binding domain superfamily/Winged helix DNA-binding domain"/>
    <property type="match status" value="1"/>
</dbReference>
<dbReference type="InterPro" id="IPR000595">
    <property type="entry name" value="cNMP-bd_dom"/>
</dbReference>
<dbReference type="InterPro" id="IPR018490">
    <property type="entry name" value="cNMP-bd_dom_sf"/>
</dbReference>
<dbReference type="InterPro" id="IPR050397">
    <property type="entry name" value="Env_Response_Regulators"/>
</dbReference>
<dbReference type="InterPro" id="IPR012318">
    <property type="entry name" value="HTH_CRP"/>
</dbReference>
<dbReference type="InterPro" id="IPR014710">
    <property type="entry name" value="RmlC-like_jellyroll"/>
</dbReference>
<dbReference type="InterPro" id="IPR018335">
    <property type="entry name" value="Tscrpt_reg_HTH_Crp-type_CS"/>
</dbReference>
<dbReference type="InterPro" id="IPR022299">
    <property type="entry name" value="Tscrpt_reg_NtcA"/>
</dbReference>
<dbReference type="InterPro" id="IPR036388">
    <property type="entry name" value="WH-like_DNA-bd_sf"/>
</dbReference>
<dbReference type="InterPro" id="IPR036390">
    <property type="entry name" value="WH_DNA-bd_sf"/>
</dbReference>
<dbReference type="NCBIfam" id="TIGR03697">
    <property type="entry name" value="NtcA_cyano"/>
    <property type="match status" value="1"/>
</dbReference>
<dbReference type="PANTHER" id="PTHR24567">
    <property type="entry name" value="CRP FAMILY TRANSCRIPTIONAL REGULATORY PROTEIN"/>
    <property type="match status" value="1"/>
</dbReference>
<dbReference type="PANTHER" id="PTHR24567:SF65">
    <property type="entry name" value="REGULATORY PROTEIN CYSR HOMOLOG"/>
    <property type="match status" value="1"/>
</dbReference>
<dbReference type="Pfam" id="PF00027">
    <property type="entry name" value="cNMP_binding"/>
    <property type="match status" value="1"/>
</dbReference>
<dbReference type="Pfam" id="PF13545">
    <property type="entry name" value="HTH_Crp_2"/>
    <property type="match status" value="1"/>
</dbReference>
<dbReference type="PRINTS" id="PR00034">
    <property type="entry name" value="HTHCRP"/>
</dbReference>
<dbReference type="SMART" id="SM00100">
    <property type="entry name" value="cNMP"/>
    <property type="match status" value="1"/>
</dbReference>
<dbReference type="SMART" id="SM00419">
    <property type="entry name" value="HTH_CRP"/>
    <property type="match status" value="1"/>
</dbReference>
<dbReference type="SUPFAM" id="SSF51206">
    <property type="entry name" value="cAMP-binding domain-like"/>
    <property type="match status" value="1"/>
</dbReference>
<dbReference type="SUPFAM" id="SSF46785">
    <property type="entry name" value="Winged helix' DNA-binding domain"/>
    <property type="match status" value="1"/>
</dbReference>
<dbReference type="PROSITE" id="PS50042">
    <property type="entry name" value="CNMP_BINDING_3"/>
    <property type="match status" value="1"/>
</dbReference>
<dbReference type="PROSITE" id="PS00042">
    <property type="entry name" value="HTH_CRP_1"/>
    <property type="match status" value="1"/>
</dbReference>
<dbReference type="PROSITE" id="PS51063">
    <property type="entry name" value="HTH_CRP_2"/>
    <property type="match status" value="1"/>
</dbReference>
<sequence length="222" mass="24833">MLANENSLLTMFRELGSGKLPLQIEQFERGKTIFFPGDPAERVYLLVKGAVKLSRVYESGEEITVALLRENSVFGVLSLLTGQRSDRFYHAVAFTPVQLFSVPIEFMQKALIERPELANVMLQGLSSRILQTEMMIETLAHRDMGSRLVSFLLILCRDFGIPSPDGITIDLKLSHQAIAEAIGSTRVTVTRLLGDLRESKLIAIHKKRITVFNPVALSQQFS</sequence>
<proteinExistence type="evidence at protein level"/>